<comment type="function">
    <text evidence="1">Acts as a negative regulator for transcription and replication by sticking to the nucleocapsid. This effect might be regulated by the cytoplasmic interaction with tubulin that dissociates the M protein from the nucleocapsid (By similarity). Plays a crucial role in virion assembly and budding. Forms a shell at the inner face of the plasma membrane and concentrates the HN and F glycoproteins.</text>
</comment>
<comment type="subunit">
    <text evidence="2">Homomultimer. Binds to the cytoplasmic regions of F and HN proteins. Interacts with nucleocapsid. Interacts with human alpha-tubulin and beta-tubulin. Interacts with host ANP32B.</text>
</comment>
<comment type="subcellular location">
    <subcellularLocation>
        <location evidence="5">Virion</location>
    </subcellularLocation>
    <subcellularLocation>
        <location evidence="4">Host cytoplasm</location>
    </subcellularLocation>
    <subcellularLocation>
        <location evidence="4">Host cell membrane</location>
        <topology evidence="4">Peripheral membrane protein</topology>
        <orientation evidence="4">Cytoplasmic side</orientation>
    </subcellularLocation>
    <text>During bud formation, associates at the inner side of the plasma membrane of infected cells.</text>
</comment>
<comment type="domain">
    <text evidence="1">Late-budding domains (L domains) are short sequence motifs essential for viral particle budding. They recruit proteins of the host ESCRT machinery (Endosomal Sorting Complex Required for Transport) or ESCRT-associated proteins. The matrix protein contains one L domain: a YLDL motif (By similarity).</text>
</comment>
<comment type="PTM">
    <text evidence="1">A large portion is phosphorylated in the cytoplasm, but not in virion. However, this phosphorylation is not essential for virus replication (By similarity).</text>
</comment>
<comment type="similarity">
    <text evidence="5">Belongs to the morbillivirus/respirovirus/rubulavirus M protein family.</text>
</comment>
<organism>
    <name type="scientific">Sendai virus (strain Harris)</name>
    <name type="common">SeV</name>
    <dbReference type="NCBI Taxonomy" id="11196"/>
    <lineage>
        <taxon>Viruses</taxon>
        <taxon>Riboviria</taxon>
        <taxon>Orthornavirae</taxon>
        <taxon>Negarnaviricota</taxon>
        <taxon>Haploviricotina</taxon>
        <taxon>Monjiviricetes</taxon>
        <taxon>Mononegavirales</taxon>
        <taxon>Paramyxoviridae</taxon>
        <taxon>Feraresvirinae</taxon>
        <taxon>Respirovirus</taxon>
        <taxon>Respirovirus muris</taxon>
    </lineage>
</organism>
<evidence type="ECO:0000250" key="1"/>
<evidence type="ECO:0000250" key="2">
    <source>
        <dbReference type="UniProtKB" id="P06446"/>
    </source>
</evidence>
<evidence type="ECO:0000269" key="3">
    <source>
    </source>
</evidence>
<evidence type="ECO:0000269" key="4">
    <source>
    </source>
</evidence>
<evidence type="ECO:0000305" key="5"/>
<organismHost>
    <name type="scientific">Cavia cutleri</name>
    <name type="common">Guinea pig</name>
    <dbReference type="NCBI Taxonomy" id="10144"/>
</organismHost>
<organismHost>
    <name type="scientific">Cricetidae sp.</name>
    <name type="common">Hamster</name>
    <dbReference type="NCBI Taxonomy" id="36483"/>
</organismHost>
<organismHost>
    <name type="scientific">Mus musculus</name>
    <name type="common">Mouse</name>
    <dbReference type="NCBI Taxonomy" id="10090"/>
</organismHost>
<organismHost>
    <name type="scientific">Rattus norvegicus</name>
    <name type="common">Rat</name>
    <dbReference type="NCBI Taxonomy" id="10116"/>
</organismHost>
<reference key="1">
    <citation type="journal article" date="1984" name="J. Virol.">
        <title>Analysis of the Sendai virus M gene and protein.</title>
        <authorList>
            <person name="Blumberg B.M."/>
            <person name="Rose K."/>
            <person name="Simona M.G."/>
            <person name="Roux L."/>
            <person name="Giorgi C."/>
            <person name="Kolakofsky D."/>
        </authorList>
    </citation>
    <scope>NUCLEOTIDE SEQUENCE [GENOMIC RNA]</scope>
</reference>
<reference key="2">
    <citation type="journal article" date="1996" name="Virology">
        <title>A Sendai virus vector leading to the efficient expression of mutant M proteins interfering with virus particle budding.</title>
        <authorList>
            <person name="Mottet G."/>
            <person name="Muehlemann A."/>
            <person name="Tapparel C."/>
            <person name="Hoffmann F."/>
            <person name="Roux L."/>
        </authorList>
    </citation>
    <scope>SUBCELLULAR LOCATION</scope>
    <scope>MUTAGENESIS OF 112-THR-VAL-113</scope>
</reference>
<reference key="3">
    <citation type="journal article" date="1999" name="J. Gen. Virol.">
        <title>Characterization of Sendai virus M protein mutants that can partially interfere with virus particle production.</title>
        <authorList>
            <person name="Mottet G."/>
            <person name="Mueller V."/>
            <person name="Roux L."/>
        </authorList>
    </citation>
    <scope>INTERACTION WITH MEMBRANE</scope>
    <scope>MUTAGENESIS OF THR-112; VAL-113 AND 112-THR-VAL-113</scope>
</reference>
<dbReference type="EMBL" id="K02742">
    <property type="protein sequence ID" value="AAA47811.1"/>
    <property type="molecule type" value="Genomic_RNA"/>
</dbReference>
<dbReference type="PIR" id="A04042">
    <property type="entry name" value="MFNZS"/>
</dbReference>
<dbReference type="SMR" id="P03426"/>
<dbReference type="GO" id="GO:0030430">
    <property type="term" value="C:host cell cytoplasm"/>
    <property type="evidence" value="ECO:0007669"/>
    <property type="project" value="UniProtKB-SubCell"/>
</dbReference>
<dbReference type="GO" id="GO:0020002">
    <property type="term" value="C:host cell plasma membrane"/>
    <property type="evidence" value="ECO:0007669"/>
    <property type="project" value="UniProtKB-SubCell"/>
</dbReference>
<dbReference type="GO" id="GO:0016020">
    <property type="term" value="C:membrane"/>
    <property type="evidence" value="ECO:0007669"/>
    <property type="project" value="UniProtKB-KW"/>
</dbReference>
<dbReference type="GO" id="GO:0044423">
    <property type="term" value="C:virion component"/>
    <property type="evidence" value="ECO:0007669"/>
    <property type="project" value="UniProtKB-KW"/>
</dbReference>
<dbReference type="GO" id="GO:0039660">
    <property type="term" value="F:structural constituent of virion"/>
    <property type="evidence" value="ECO:0007669"/>
    <property type="project" value="UniProtKB-KW"/>
</dbReference>
<dbReference type="GO" id="GO:0039702">
    <property type="term" value="P:viral budding via host ESCRT complex"/>
    <property type="evidence" value="ECO:0007669"/>
    <property type="project" value="UniProtKB-KW"/>
</dbReference>
<dbReference type="Gene3D" id="2.70.20.60">
    <property type="entry name" value="Viral matrix protein, C-terminal domain"/>
    <property type="match status" value="1"/>
</dbReference>
<dbReference type="Gene3D" id="2.70.20.50">
    <property type="entry name" value="Viral matrix protein, N-terminal domain"/>
    <property type="match status" value="1"/>
</dbReference>
<dbReference type="InterPro" id="IPR042539">
    <property type="entry name" value="Matrix_C"/>
</dbReference>
<dbReference type="InterPro" id="IPR042540">
    <property type="entry name" value="Matrix_N"/>
</dbReference>
<dbReference type="InterPro" id="IPR055413">
    <property type="entry name" value="Matrix_Paramyxo_C"/>
</dbReference>
<dbReference type="InterPro" id="IPR000982">
    <property type="entry name" value="Matrix_Paramyxo_N"/>
</dbReference>
<dbReference type="Pfam" id="PF23765">
    <property type="entry name" value="Matrix_Paramyxo_C"/>
    <property type="match status" value="1"/>
</dbReference>
<dbReference type="Pfam" id="PF00661">
    <property type="entry name" value="Matrix_Paramyxo_N"/>
    <property type="match status" value="1"/>
</dbReference>
<proteinExistence type="evidence at protein level"/>
<keyword id="KW-1032">Host cell membrane</keyword>
<keyword id="KW-1035">Host cytoplasm</keyword>
<keyword id="KW-1043">Host membrane</keyword>
<keyword id="KW-0945">Host-virus interaction</keyword>
<keyword id="KW-0472">Membrane</keyword>
<keyword id="KW-0597">Phosphoprotein</keyword>
<keyword id="KW-1198">Viral budding</keyword>
<keyword id="KW-1187">Viral budding via the host ESCRT complexes</keyword>
<keyword id="KW-0468">Viral matrix protein</keyword>
<keyword id="KW-1188">Viral release from host cell</keyword>
<keyword id="KW-0946">Virion</keyword>
<sequence>MADIYRFPKFSYEDNGTVEPLPLRTGSDKKAIPYIRIIKVGDPPKHGVRYLDLLLLGFFETPKQTTNLGSVSDLTEPTSYSICGSGSLPIGVAKYYGTDQELLKACTDLRITVRRTVRAGEMIVYMVDSIGAPLLPWSGRLRQGMIFNANKVALAPQCLPVDKDIRFRVVFVNGTSLGAITIAKIPKTLADLALPNSISVNLLVTLKTGISTEQKGVLPVLDDQGEKKLNFMVHLGLIRRKVGKIYSVEYCKSKIERMRLIFSLGLIGGISFHVQVTGTLSKTFMSQLAWKRAVCFPLMDVNPHMNLVIWAASVEITGVDAVFQPAIPRDFRYYPNVVAKNIGRIRKL</sequence>
<gene>
    <name type="primary">M</name>
</gene>
<name>MATRX_SENDH</name>
<feature type="chain" id="PRO_0000142774" description="Matrix protein">
    <location>
        <begin position="1"/>
        <end position="348"/>
    </location>
</feature>
<feature type="short sequence motif" description="YLDL motif" evidence="1">
    <location>
        <begin position="50"/>
        <end position="53"/>
    </location>
</feature>
<feature type="modified residue" description="Phosphoserine; by host" evidence="1">
    <location>
        <position position="70"/>
    </location>
</feature>
<feature type="mutagenesis site" description="Not incorporated in virions. No effect on in vitro membrane association." evidence="3">
    <original>TV</original>
    <variation>EE</variation>
    <variation>KE</variation>
    <location>
        <begin position="112"/>
        <end position="113"/>
    </location>
</feature>
<feature type="mutagenesis site" description="Not incorporated in virions. Loss of efficient in vivo transport to the plasma membrane. 60% loss of in vitro membrane association. Reduces nucleocapsid-membrane association. Loss of interaction with itself." evidence="3">
    <original>TV</original>
    <variation>KR</variation>
    <variation>ME</variation>
    <location>
        <begin position="112"/>
        <end position="113"/>
    </location>
</feature>
<feature type="mutagenesis site" description="Not incorporated in virions." evidence="3 4">
    <original>TV</original>
    <variation>RE</variation>
    <location>
        <begin position="112"/>
        <end position="113"/>
    </location>
</feature>
<feature type="mutagenesis site" description="No effect." evidence="3">
    <original>T</original>
    <variation>E</variation>
    <variation>M</variation>
    <location>
        <position position="112"/>
    </location>
</feature>
<feature type="mutagenesis site" description="20% increase of in vitro membrane association." evidence="3">
    <original>T</original>
    <variation>K</variation>
    <variation>R</variation>
    <location>
        <position position="112"/>
    </location>
</feature>
<feature type="mutagenesis site" description="Not incorporated in virions." evidence="3">
    <original>V</original>
    <variation>A</variation>
    <location>
        <position position="113"/>
    </location>
</feature>
<feature type="mutagenesis site" description="No effect." evidence="3">
    <original>V</original>
    <variation>C</variation>
    <location>
        <position position="113"/>
    </location>
</feature>
<feature type="mutagenesis site" description="Not incorporated in virions. 50% loss of in vitro membrane association." evidence="3">
    <original>V</original>
    <variation>E</variation>
    <location>
        <position position="113"/>
    </location>
</feature>
<feature type="mutagenesis site" description="Not incorporated in virions." evidence="3">
    <original>V</original>
    <variation>F</variation>
    <variation>K</variation>
    <variation>L</variation>
    <variation>R</variation>
    <location>
        <position position="113"/>
    </location>
</feature>
<protein>
    <recommendedName>
        <fullName>Matrix protein</fullName>
        <shortName>M protein</shortName>
    </recommendedName>
</protein>
<accession>P03426</accession>